<feature type="chain" id="PRO_0000265707" description="Elongation factor 4">
    <location>
        <begin position="1"/>
        <end position="607"/>
    </location>
</feature>
<feature type="domain" description="tr-type G">
    <location>
        <begin position="11"/>
        <end position="193"/>
    </location>
</feature>
<feature type="binding site" evidence="1">
    <location>
        <begin position="23"/>
        <end position="28"/>
    </location>
    <ligand>
        <name>GTP</name>
        <dbReference type="ChEBI" id="CHEBI:37565"/>
    </ligand>
</feature>
<feature type="binding site" evidence="1">
    <location>
        <begin position="140"/>
        <end position="143"/>
    </location>
    <ligand>
        <name>GTP</name>
        <dbReference type="ChEBI" id="CHEBI:37565"/>
    </ligand>
</feature>
<keyword id="KW-1003">Cell membrane</keyword>
<keyword id="KW-0342">GTP-binding</keyword>
<keyword id="KW-0378">Hydrolase</keyword>
<keyword id="KW-0472">Membrane</keyword>
<keyword id="KW-0547">Nucleotide-binding</keyword>
<keyword id="KW-0648">Protein biosynthesis</keyword>
<organism>
    <name type="scientific">Staphylococcus aureus (strain bovine RF122 / ET3-1)</name>
    <dbReference type="NCBI Taxonomy" id="273036"/>
    <lineage>
        <taxon>Bacteria</taxon>
        <taxon>Bacillati</taxon>
        <taxon>Bacillota</taxon>
        <taxon>Bacilli</taxon>
        <taxon>Bacillales</taxon>
        <taxon>Staphylococcaceae</taxon>
        <taxon>Staphylococcus</taxon>
    </lineage>
</organism>
<evidence type="ECO:0000255" key="1">
    <source>
        <dbReference type="HAMAP-Rule" id="MF_00071"/>
    </source>
</evidence>
<comment type="function">
    <text evidence="1">Required for accurate and efficient protein synthesis under certain stress conditions. May act as a fidelity factor of the translation reaction, by catalyzing a one-codon backward translocation of tRNAs on improperly translocated ribosomes. Back-translocation proceeds from a post-translocation (POST) complex to a pre-translocation (PRE) complex, thus giving elongation factor G a second chance to translocate the tRNAs correctly. Binds to ribosomes in a GTP-dependent manner.</text>
</comment>
<comment type="catalytic activity">
    <reaction evidence="1">
        <text>GTP + H2O = GDP + phosphate + H(+)</text>
        <dbReference type="Rhea" id="RHEA:19669"/>
        <dbReference type="ChEBI" id="CHEBI:15377"/>
        <dbReference type="ChEBI" id="CHEBI:15378"/>
        <dbReference type="ChEBI" id="CHEBI:37565"/>
        <dbReference type="ChEBI" id="CHEBI:43474"/>
        <dbReference type="ChEBI" id="CHEBI:58189"/>
        <dbReference type="EC" id="3.6.5.n1"/>
    </reaction>
</comment>
<comment type="subcellular location">
    <subcellularLocation>
        <location evidence="1">Cell membrane</location>
        <topology evidence="1">Peripheral membrane protein</topology>
        <orientation evidence="1">Cytoplasmic side</orientation>
    </subcellularLocation>
</comment>
<comment type="similarity">
    <text evidence="1">Belongs to the TRAFAC class translation factor GTPase superfamily. Classic translation factor GTPase family. LepA subfamily.</text>
</comment>
<gene>
    <name evidence="1" type="primary">lepA</name>
    <name type="ordered locus">SAB1457c</name>
</gene>
<name>LEPA_STAAB</name>
<proteinExistence type="inferred from homology"/>
<dbReference type="EC" id="3.6.5.n1" evidence="1"/>
<dbReference type="EMBL" id="AJ938182">
    <property type="protein sequence ID" value="CAI81146.1"/>
    <property type="molecule type" value="Genomic_DNA"/>
</dbReference>
<dbReference type="RefSeq" id="WP_000368338.1">
    <property type="nucleotide sequence ID" value="NC_007622.1"/>
</dbReference>
<dbReference type="SMR" id="Q2YT42"/>
<dbReference type="KEGG" id="sab:SAB1457c"/>
<dbReference type="HOGENOM" id="CLU_009995_3_3_9"/>
<dbReference type="GO" id="GO:0005886">
    <property type="term" value="C:plasma membrane"/>
    <property type="evidence" value="ECO:0007669"/>
    <property type="project" value="UniProtKB-SubCell"/>
</dbReference>
<dbReference type="GO" id="GO:0005525">
    <property type="term" value="F:GTP binding"/>
    <property type="evidence" value="ECO:0007669"/>
    <property type="project" value="UniProtKB-UniRule"/>
</dbReference>
<dbReference type="GO" id="GO:0003924">
    <property type="term" value="F:GTPase activity"/>
    <property type="evidence" value="ECO:0007669"/>
    <property type="project" value="UniProtKB-UniRule"/>
</dbReference>
<dbReference type="GO" id="GO:0043022">
    <property type="term" value="F:ribosome binding"/>
    <property type="evidence" value="ECO:0007669"/>
    <property type="project" value="UniProtKB-UniRule"/>
</dbReference>
<dbReference type="GO" id="GO:0003746">
    <property type="term" value="F:translation elongation factor activity"/>
    <property type="evidence" value="ECO:0007669"/>
    <property type="project" value="UniProtKB-UniRule"/>
</dbReference>
<dbReference type="GO" id="GO:0045727">
    <property type="term" value="P:positive regulation of translation"/>
    <property type="evidence" value="ECO:0007669"/>
    <property type="project" value="UniProtKB-UniRule"/>
</dbReference>
<dbReference type="CDD" id="cd03699">
    <property type="entry name" value="EF4_II"/>
    <property type="match status" value="1"/>
</dbReference>
<dbReference type="CDD" id="cd16260">
    <property type="entry name" value="EF4_III"/>
    <property type="match status" value="1"/>
</dbReference>
<dbReference type="CDD" id="cd01890">
    <property type="entry name" value="LepA"/>
    <property type="match status" value="1"/>
</dbReference>
<dbReference type="CDD" id="cd03709">
    <property type="entry name" value="lepA_C"/>
    <property type="match status" value="1"/>
</dbReference>
<dbReference type="FunFam" id="3.40.50.300:FF:000078">
    <property type="entry name" value="Elongation factor 4"/>
    <property type="match status" value="1"/>
</dbReference>
<dbReference type="FunFam" id="2.40.30.10:FF:000015">
    <property type="entry name" value="Translation factor GUF1, mitochondrial"/>
    <property type="match status" value="1"/>
</dbReference>
<dbReference type="FunFam" id="3.30.70.240:FF:000007">
    <property type="entry name" value="Translation factor GUF1, mitochondrial"/>
    <property type="match status" value="1"/>
</dbReference>
<dbReference type="FunFam" id="3.30.70.2570:FF:000001">
    <property type="entry name" value="Translation factor GUF1, mitochondrial"/>
    <property type="match status" value="1"/>
</dbReference>
<dbReference type="FunFam" id="3.30.70.870:FF:000004">
    <property type="entry name" value="Translation factor GUF1, mitochondrial"/>
    <property type="match status" value="1"/>
</dbReference>
<dbReference type="Gene3D" id="3.30.70.240">
    <property type="match status" value="1"/>
</dbReference>
<dbReference type="Gene3D" id="3.30.70.2570">
    <property type="entry name" value="Elongation factor 4, C-terminal domain"/>
    <property type="match status" value="1"/>
</dbReference>
<dbReference type="Gene3D" id="3.30.70.870">
    <property type="entry name" value="Elongation Factor G (Translational Gtpase), domain 3"/>
    <property type="match status" value="1"/>
</dbReference>
<dbReference type="Gene3D" id="3.40.50.300">
    <property type="entry name" value="P-loop containing nucleotide triphosphate hydrolases"/>
    <property type="match status" value="1"/>
</dbReference>
<dbReference type="Gene3D" id="2.40.30.10">
    <property type="entry name" value="Translation factors"/>
    <property type="match status" value="1"/>
</dbReference>
<dbReference type="HAMAP" id="MF_00071">
    <property type="entry name" value="LepA"/>
    <property type="match status" value="1"/>
</dbReference>
<dbReference type="InterPro" id="IPR006297">
    <property type="entry name" value="EF-4"/>
</dbReference>
<dbReference type="InterPro" id="IPR035647">
    <property type="entry name" value="EFG_III/V"/>
</dbReference>
<dbReference type="InterPro" id="IPR000640">
    <property type="entry name" value="EFG_V-like"/>
</dbReference>
<dbReference type="InterPro" id="IPR004161">
    <property type="entry name" value="EFTu-like_2"/>
</dbReference>
<dbReference type="InterPro" id="IPR031157">
    <property type="entry name" value="G_TR_CS"/>
</dbReference>
<dbReference type="InterPro" id="IPR038363">
    <property type="entry name" value="LepA_C_sf"/>
</dbReference>
<dbReference type="InterPro" id="IPR013842">
    <property type="entry name" value="LepA_CTD"/>
</dbReference>
<dbReference type="InterPro" id="IPR035654">
    <property type="entry name" value="LepA_IV"/>
</dbReference>
<dbReference type="InterPro" id="IPR027417">
    <property type="entry name" value="P-loop_NTPase"/>
</dbReference>
<dbReference type="InterPro" id="IPR005225">
    <property type="entry name" value="Small_GTP-bd"/>
</dbReference>
<dbReference type="InterPro" id="IPR000795">
    <property type="entry name" value="T_Tr_GTP-bd_dom"/>
</dbReference>
<dbReference type="InterPro" id="IPR009000">
    <property type="entry name" value="Transl_B-barrel_sf"/>
</dbReference>
<dbReference type="NCBIfam" id="TIGR01393">
    <property type="entry name" value="lepA"/>
    <property type="match status" value="1"/>
</dbReference>
<dbReference type="NCBIfam" id="TIGR00231">
    <property type="entry name" value="small_GTP"/>
    <property type="match status" value="1"/>
</dbReference>
<dbReference type="PANTHER" id="PTHR43512:SF4">
    <property type="entry name" value="TRANSLATION FACTOR GUF1 HOMOLOG, CHLOROPLASTIC"/>
    <property type="match status" value="1"/>
</dbReference>
<dbReference type="PANTHER" id="PTHR43512">
    <property type="entry name" value="TRANSLATION FACTOR GUF1-RELATED"/>
    <property type="match status" value="1"/>
</dbReference>
<dbReference type="Pfam" id="PF00679">
    <property type="entry name" value="EFG_C"/>
    <property type="match status" value="1"/>
</dbReference>
<dbReference type="Pfam" id="PF00009">
    <property type="entry name" value="GTP_EFTU"/>
    <property type="match status" value="1"/>
</dbReference>
<dbReference type="Pfam" id="PF03144">
    <property type="entry name" value="GTP_EFTU_D2"/>
    <property type="match status" value="1"/>
</dbReference>
<dbReference type="Pfam" id="PF06421">
    <property type="entry name" value="LepA_C"/>
    <property type="match status" value="1"/>
</dbReference>
<dbReference type="PRINTS" id="PR00315">
    <property type="entry name" value="ELONGATNFCT"/>
</dbReference>
<dbReference type="SMART" id="SM00838">
    <property type="entry name" value="EFG_C"/>
    <property type="match status" value="1"/>
</dbReference>
<dbReference type="SUPFAM" id="SSF54980">
    <property type="entry name" value="EF-G C-terminal domain-like"/>
    <property type="match status" value="2"/>
</dbReference>
<dbReference type="SUPFAM" id="SSF52540">
    <property type="entry name" value="P-loop containing nucleoside triphosphate hydrolases"/>
    <property type="match status" value="1"/>
</dbReference>
<dbReference type="SUPFAM" id="SSF50447">
    <property type="entry name" value="Translation proteins"/>
    <property type="match status" value="1"/>
</dbReference>
<dbReference type="PROSITE" id="PS00301">
    <property type="entry name" value="G_TR_1"/>
    <property type="match status" value="1"/>
</dbReference>
<dbReference type="PROSITE" id="PS51722">
    <property type="entry name" value="G_TR_2"/>
    <property type="match status" value="1"/>
</dbReference>
<protein>
    <recommendedName>
        <fullName evidence="1">Elongation factor 4</fullName>
        <shortName evidence="1">EF-4</shortName>
        <ecNumber evidence="1">3.6.5.n1</ecNumber>
    </recommendedName>
    <alternativeName>
        <fullName evidence="1">Ribosomal back-translocase LepA</fullName>
    </alternativeName>
</protein>
<reference key="1">
    <citation type="journal article" date="2007" name="PLoS ONE">
        <title>Molecular correlates of host specialization in Staphylococcus aureus.</title>
        <authorList>
            <person name="Herron-Olson L."/>
            <person name="Fitzgerald J.R."/>
            <person name="Musser J.M."/>
            <person name="Kapur V."/>
        </authorList>
    </citation>
    <scope>NUCLEOTIDE SEQUENCE [LARGE SCALE GENOMIC DNA]</scope>
    <source>
        <strain>bovine RF122 / ET3-1</strain>
    </source>
</reference>
<accession>Q2YT42</accession>
<sequence length="607" mass="68189">MDNEQRLKRRENIRNFSIIAHIDHGKSTLADRILENTKSVETRDMQDQLLDSMDLERERGITIKLNAVRLKYEAKDGNTYTFHLIDTPGHVDFTYEVSRSLAACEGAILVVDAAQGIEAQTLANVYLALDNELELLPVINKIDLPAAEPERVKQEIEDMIGLDQDDVVLASAKSNIGIEEILEKIVEVVPAPDGDPEAPLKALIFDSEYDPYRGVISSIRIVDGVVKAGDKIRMMATGKEFEVTEVGINTPKQLPVDELTVGDVGYIIASIKNVDDSRVGDTITLASRPASEPLQGYKKMNPMVYCGLFPIDNKNYNDLREALEKLQLNDASLEFEPESSQALGFGYRTGFLGMLHMEIIQERIEREFGIELIATAPSVIYQCILRDGSEVTVDNPAQMPDRDKIDKIFEPYVRATMMVPNDYVGAVMELCQRKRGQFINMDYLDDIRVNIVYELPLAEVVFDFFDQLKSNTKGYASFDYEFIENKESNLVKMDILLNGDKVDALSFIVHRDFAYERGKALVEKLKTLIPRQQFEVPVQAAIGQKIVARTNIKSMGKNVLAKCYGGDISRKRKLLEKQKAGKAKMKAVGNVEIPQDAFLAVLKMDDE</sequence>